<proteinExistence type="evidence at transcript level"/>
<sequence>MNSMEIRQAFAGLLTLSMFIMLGNMIKKDHFDYPAEEVEIQTTEVSQHDLATVSHISQKSKQNDKALKPCWNPPTLKEVEQSKGFIIFSLTNGPEYHIAQVADAVVVAKYLGATLVLPDIKNSKSGNSMNLGDIYDVENVLNKLNGLVKVTKTLPPHVSTRNTPIVRVPNKVSQDYIMKKLKPIYQAKGIIKIESYFPSKNTISRNNNSLESLLCQTMFGGTLELKKEIQEEAESIVQKLETWSQESNGPFVAVDLRIEGLKNECNGKDGKGRKQCYQGHEIGEFLKRIGFGQETVIYVTQTKWSPDLNSLRYMFPKTYTKENIMSSTKKEKFINSESIEFEKAIDFYICSESDVFVPSILGPFYENVAGMRIVSGKNEIIVPSEVVSPSASASEHMSPYVTKKNHLAYKCFC</sequence>
<gene>
    <name evidence="5 7" type="primary">MSR</name>
</gene>
<feature type="chain" id="PRO_0000442102" description="Protein MANNAN SYNTHESIS-RELATED">
    <location>
        <begin position="1"/>
        <end position="413"/>
    </location>
</feature>
<feature type="topological domain" description="Cytoplasmic" evidence="6">
    <location>
        <begin position="1"/>
        <end position="5"/>
    </location>
</feature>
<feature type="transmembrane region" description="Helical; Signal-anchor for type II membrane protein" evidence="6">
    <location>
        <begin position="6"/>
        <end position="26"/>
    </location>
</feature>
<feature type="topological domain" description="Lumenal" evidence="6">
    <location>
        <begin position="27"/>
        <end position="413"/>
    </location>
</feature>
<feature type="binding site" evidence="1">
    <location>
        <begin position="255"/>
        <end position="257"/>
    </location>
    <ligand>
        <name>substrate</name>
    </ligand>
</feature>
<feature type="glycosylation site" description="N-linked (GlcNAc...) asparagine" evidence="2">
    <location>
        <position position="207"/>
    </location>
</feature>
<keyword id="KW-0119">Carbohydrate metabolism</keyword>
<keyword id="KW-0961">Cell wall biogenesis/degradation</keyword>
<keyword id="KW-0294">Fucose metabolism</keyword>
<keyword id="KW-0325">Glycoprotein</keyword>
<keyword id="KW-0328">Glycosyltransferase</keyword>
<keyword id="KW-0333">Golgi apparatus</keyword>
<keyword id="KW-0472">Membrane</keyword>
<keyword id="KW-0735">Signal-anchor</keyword>
<keyword id="KW-0808">Transferase</keyword>
<keyword id="KW-0812">Transmembrane</keyword>
<keyword id="KW-1133">Transmembrane helix</keyword>
<comment type="function">
    <text evidence="3">Glycosyltransferase involved in mannan biosynthesis.</text>
</comment>
<comment type="pathway">
    <text evidence="6">Glycan biosynthesis.</text>
</comment>
<comment type="subcellular location">
    <subcellularLocation>
        <location evidence="3">Golgi apparatus membrane</location>
        <topology evidence="6">Single-pass type II membrane protein</topology>
    </subcellularLocation>
</comment>
<comment type="tissue specificity">
    <text evidence="3">Highly and specifically expressed in the endosperm.</text>
</comment>
<comment type="similarity">
    <text evidence="6">Belongs to the glycosyltransferase GT106 family.</text>
</comment>
<evidence type="ECO:0000250" key="1">
    <source>
        <dbReference type="UniProtKB" id="Q9H488"/>
    </source>
</evidence>
<evidence type="ECO:0000255" key="2">
    <source>
        <dbReference type="PROSITE-ProRule" id="PRU00498"/>
    </source>
</evidence>
<evidence type="ECO:0000269" key="3">
    <source>
    </source>
</evidence>
<evidence type="ECO:0000303" key="4">
    <source>
    </source>
</evidence>
<evidence type="ECO:0000303" key="5">
    <source>
    </source>
</evidence>
<evidence type="ECO:0000305" key="6"/>
<evidence type="ECO:0000312" key="7">
    <source>
        <dbReference type="EMBL" id="AFV79649.1"/>
    </source>
</evidence>
<organism>
    <name type="scientific">Trigonella foenum-graecum</name>
    <name type="common">Fenugreek</name>
    <dbReference type="NCBI Taxonomy" id="78534"/>
    <lineage>
        <taxon>Eukaryota</taxon>
        <taxon>Viridiplantae</taxon>
        <taxon>Streptophyta</taxon>
        <taxon>Embryophyta</taxon>
        <taxon>Tracheophyta</taxon>
        <taxon>Spermatophyta</taxon>
        <taxon>Magnoliopsida</taxon>
        <taxon>eudicotyledons</taxon>
        <taxon>Gunneridae</taxon>
        <taxon>Pentapetalae</taxon>
        <taxon>rosids</taxon>
        <taxon>fabids</taxon>
        <taxon>Fabales</taxon>
        <taxon>Fabaceae</taxon>
        <taxon>Papilionoideae</taxon>
        <taxon>50 kb inversion clade</taxon>
        <taxon>NPAAA clade</taxon>
        <taxon>Hologalegina</taxon>
        <taxon>IRL clade</taxon>
        <taxon>Trifolieae</taxon>
        <taxon>Trigonella</taxon>
    </lineage>
</organism>
<dbReference type="EC" id="2.4.1.-" evidence="6"/>
<dbReference type="EMBL" id="JX237834">
    <property type="protein sequence ID" value="AFV79649.1"/>
    <property type="molecule type" value="mRNA"/>
</dbReference>
<dbReference type="GlyCosmos" id="K7R4D4">
    <property type="glycosylation" value="1 site, No reported glycans"/>
</dbReference>
<dbReference type="GO" id="GO:0005794">
    <property type="term" value="C:Golgi apparatus"/>
    <property type="evidence" value="ECO:0000314"/>
    <property type="project" value="UniProtKB"/>
</dbReference>
<dbReference type="GO" id="GO:0000139">
    <property type="term" value="C:Golgi membrane"/>
    <property type="evidence" value="ECO:0007669"/>
    <property type="project" value="UniProtKB-SubCell"/>
</dbReference>
<dbReference type="GO" id="GO:0016757">
    <property type="term" value="F:glycosyltransferase activity"/>
    <property type="evidence" value="ECO:0007669"/>
    <property type="project" value="UniProtKB-KW"/>
</dbReference>
<dbReference type="GO" id="GO:0071555">
    <property type="term" value="P:cell wall organization"/>
    <property type="evidence" value="ECO:0007669"/>
    <property type="project" value="UniProtKB-KW"/>
</dbReference>
<dbReference type="GO" id="GO:0006004">
    <property type="term" value="P:fucose metabolic process"/>
    <property type="evidence" value="ECO:0007669"/>
    <property type="project" value="UniProtKB-KW"/>
</dbReference>
<dbReference type="Gene3D" id="3.40.50.11350">
    <property type="match status" value="1"/>
</dbReference>
<dbReference type="InterPro" id="IPR024709">
    <property type="entry name" value="FucosylTrfase_pln"/>
</dbReference>
<dbReference type="InterPro" id="IPR019378">
    <property type="entry name" value="GDP-Fuc_O-FucTrfase"/>
</dbReference>
<dbReference type="PANTHER" id="PTHR31288">
    <property type="entry name" value="O-FUCOSYLTRANSFERASE FAMILY PROTEIN"/>
    <property type="match status" value="1"/>
</dbReference>
<dbReference type="PANTHER" id="PTHR31288:SF20">
    <property type="entry name" value="O-FUCOSYLTRANSFERASE FAMILY PROTEIN"/>
    <property type="match status" value="1"/>
</dbReference>
<dbReference type="Pfam" id="PF10250">
    <property type="entry name" value="O-FucT"/>
    <property type="match status" value="1"/>
</dbReference>
<accession>K7R4D4</accession>
<name>MSR_TRIFG</name>
<reference key="1">
    <citation type="journal article" date="2012" name="Plant Mol. Biol.">
        <title>Deep EST profiling of developing fenugreek endosperm to investigate galactomannan biosynthesis and its regulation.</title>
        <authorList>
            <person name="Wang Y."/>
            <person name="Alonso A.P."/>
            <person name="Wilkerson C.G."/>
            <person name="Keegstra K."/>
        </authorList>
    </citation>
    <scope>NUCLEOTIDE SEQUENCE [MRNA]</scope>
</reference>
<reference key="2">
    <citation type="journal article" date="2013" name="Plant J.">
        <title>Identification of an additional protein involved in mannan biosynthesis.</title>
        <authorList>
            <person name="Wang Y."/>
            <person name="Mortimer J.C."/>
            <person name="Davis J."/>
            <person name="Dupree P."/>
            <person name="Keegstra K."/>
        </authorList>
    </citation>
    <scope>SUBCELLULAR LOCATION</scope>
    <scope>TISSUE SPECIFICITY</scope>
    <scope>FUNCTION</scope>
</reference>
<protein>
    <recommendedName>
        <fullName evidence="5 7">Protein MANNAN SYNTHESIS-RELATED</fullName>
        <shortName evidence="5">TfMSR</shortName>
        <ecNumber evidence="6">2.4.1.-</ecNumber>
    </recommendedName>
    <alternativeName>
        <fullName evidence="6">O-fucosyltransferase</fullName>
        <shortName evidence="6">O-FucT</shortName>
    </alternativeName>
    <alternativeName>
        <fullName evidence="6">O-fucosyltransferase family protein</fullName>
    </alternativeName>
    <alternativeName>
        <fullName evidence="4">TfDUF246</fullName>
    </alternativeName>
</protein>